<comment type="function">
    <text evidence="1">Immunity protein component of a toxin-immunity protein module, which functions as a cellular contact-dependent growth inhibition (CDI) system. CDI modules allow bacteria to communicate with and inhibit the growth of closely related neighboring bacteria in a contact-dependent fashion. Protects cells against the DNase activity of CdiA, its cognate toxin protein, but not against non-cognate CdiA from E.coli strain 536 / UPEC.</text>
</comment>
<comment type="subunit">
    <text evidence="1">Interacts with cognate CdiA-CT but not non-cognate CdiA-CT from E.coli strain 536 / UPEC.</text>
</comment>
<comment type="miscellaneous">
    <text evidence="2">There are 2 cdiBAI loci in this strain, this is locus 2.</text>
</comment>
<accession>E0SDG7</accession>
<name>CDII_DICD3</name>
<proteinExistence type="evidence at protein level"/>
<dbReference type="EMBL" id="CP002038">
    <property type="protein sequence ID" value="ADM98659.1"/>
    <property type="molecule type" value="Genomic_DNA"/>
</dbReference>
<dbReference type="RefSeq" id="WP_013318105.1">
    <property type="nucleotide sequence ID" value="NC_014500.1"/>
</dbReference>
<dbReference type="STRING" id="198628.Dda3937_02097"/>
<dbReference type="KEGG" id="ddd:Dda3937_02097"/>
<dbReference type="eggNOG" id="ENOG5032WZ3">
    <property type="taxonomic scope" value="Bacteria"/>
</dbReference>
<dbReference type="HOGENOM" id="CLU_144800_0_0_6"/>
<dbReference type="OrthoDB" id="6630808at2"/>
<dbReference type="Proteomes" id="UP000006859">
    <property type="component" value="Chromosome"/>
</dbReference>
<reference key="1">
    <citation type="journal article" date="2011" name="J. Bacteriol.">
        <title>Genome sequence of the plant-pathogenic bacterium Dickeya dadantii 3937.</title>
        <authorList>
            <person name="Glasner J.D."/>
            <person name="Yang C.H."/>
            <person name="Reverchon S."/>
            <person name="Hugouvieux-Cotte-Pattat N."/>
            <person name="Condemine G."/>
            <person name="Bohin J.P."/>
            <person name="Van Gijsegem F."/>
            <person name="Yang S."/>
            <person name="Franza T."/>
            <person name="Expert D."/>
            <person name="Plunkett G. III"/>
            <person name="San Francisco M.J."/>
            <person name="Charkowski A.O."/>
            <person name="Py B."/>
            <person name="Bell K."/>
            <person name="Rauscher L."/>
            <person name="Rodriguez-Palenzuela P."/>
            <person name="Toussaint A."/>
            <person name="Holeva M.C."/>
            <person name="He S.Y."/>
            <person name="Douet V."/>
            <person name="Boccara M."/>
            <person name="Blanco C."/>
            <person name="Toth I."/>
            <person name="Anderson B.D."/>
            <person name="Biehl B.S."/>
            <person name="Mau B."/>
            <person name="Flynn S.M."/>
            <person name="Barras F."/>
            <person name="Lindeberg M."/>
            <person name="Birch P.R."/>
            <person name="Tsuyumu S."/>
            <person name="Shi X."/>
            <person name="Hibbing M."/>
            <person name="Yap M.N."/>
            <person name="Carpentier M."/>
            <person name="Dassa E."/>
            <person name="Umehara M."/>
            <person name="Kim J.F."/>
            <person name="Rusch M."/>
            <person name="Soni P."/>
            <person name="Mayhew G.F."/>
            <person name="Fouts D.E."/>
            <person name="Gill S.R."/>
            <person name="Blattner F.R."/>
            <person name="Keen N.T."/>
            <person name="Perna N.T."/>
        </authorList>
    </citation>
    <scope>NUCLEOTIDE SEQUENCE [LARGE SCALE GENOMIC DNA]</scope>
    <source>
        <strain>3937</strain>
    </source>
</reference>
<reference key="2">
    <citation type="journal article" date="2010" name="Nature">
        <title>A widespread family of polymorphic contact-dependent toxin delivery systems in bacteria.</title>
        <authorList>
            <person name="Aoki S.K."/>
            <person name="Diner E.J."/>
            <person name="de Roodenbeke C.T."/>
            <person name="Burgess B.R."/>
            <person name="Poole S.J."/>
            <person name="Braaten B.A."/>
            <person name="Jones A.M."/>
            <person name="Webb J.S."/>
            <person name="Hayes C.S."/>
            <person name="Cotter P.A."/>
            <person name="Low D.A."/>
        </authorList>
    </citation>
    <scope>FUNCTION</scope>
    <scope>STRAIN SPECIFICITY</scope>
    <scope>INTERACTION WITH CDIA-CT</scope>
    <scope>SUBUNIT</scope>
    <source>
        <strain>3937</strain>
    </source>
</reference>
<feature type="chain" id="PRO_0000432077" description="Immunity protein CdiI">
    <location>
        <begin position="1"/>
        <end position="143"/>
    </location>
</feature>
<keyword id="KW-1185">Reference proteome</keyword>
<gene>
    <name type="primary">cdiI</name>
    <name type="ordered locus">Dda3937_02097</name>
</gene>
<sequence length="143" mass="16195">MLAWNNLVEMLGCSKASNEFIYLPQKLNELPVFEEGVLGDRSYYSFFNSGVLFLLEDDLVNQISLYIQADEGFSAYTGELPLPVNSRESEIIQVLGTPSGSGGGKMDMLLGYVNRWIKYKTESHTLHIQFDQNDQLCRVTLMQ</sequence>
<protein>
    <recommendedName>
        <fullName evidence="2">Immunity protein CdiI</fullName>
    </recommendedName>
</protein>
<evidence type="ECO:0000269" key="1">
    <source>
    </source>
</evidence>
<evidence type="ECO:0000303" key="2">
    <source>
    </source>
</evidence>
<organism>
    <name type="scientific">Dickeya dadantii (strain 3937)</name>
    <name type="common">Erwinia chrysanthemi (strain 3937)</name>
    <dbReference type="NCBI Taxonomy" id="198628"/>
    <lineage>
        <taxon>Bacteria</taxon>
        <taxon>Pseudomonadati</taxon>
        <taxon>Pseudomonadota</taxon>
        <taxon>Gammaproteobacteria</taxon>
        <taxon>Enterobacterales</taxon>
        <taxon>Pectobacteriaceae</taxon>
        <taxon>Dickeya</taxon>
    </lineage>
</organism>